<comment type="function">
    <text evidence="1">RNA polymerase that catalyzes the synthesis of short RNA molecules used as primers for DNA polymerase during DNA replication.</text>
</comment>
<comment type="catalytic activity">
    <reaction evidence="1">
        <text>ssDNA + n NTP = ssDNA/pppN(pN)n-1 hybrid + (n-1) diphosphate.</text>
        <dbReference type="EC" id="2.7.7.101"/>
    </reaction>
</comment>
<comment type="cofactor">
    <cofactor evidence="1">
        <name>Zn(2+)</name>
        <dbReference type="ChEBI" id="CHEBI:29105"/>
    </cofactor>
    <text evidence="1">Binds 1 zinc ion per monomer.</text>
</comment>
<comment type="cofactor">
    <cofactor evidence="1">
        <name>Mg(2+)</name>
        <dbReference type="ChEBI" id="CHEBI:18420"/>
    </cofactor>
    <text evidence="1">Binds two Mg(2+) per subunit.</text>
</comment>
<comment type="subunit">
    <text evidence="1">Monomer. Interacts with DnaB.</text>
</comment>
<comment type="domain">
    <text evidence="1">Contains an N-terminal zinc-binding domain, a central core domain that contains the primase activity, and a C-terminal DnaB-binding domain.</text>
</comment>
<comment type="similarity">
    <text evidence="1">Belongs to the DnaG primase family.</text>
</comment>
<proteinExistence type="inferred from homology"/>
<protein>
    <recommendedName>
        <fullName evidence="1">DNA primase</fullName>
        <ecNumber evidence="1">2.7.7.101</ecNumber>
    </recommendedName>
</protein>
<feature type="chain" id="PRO_0000180487" description="DNA primase">
    <location>
        <begin position="1"/>
        <end position="595"/>
    </location>
</feature>
<feature type="domain" description="Toprim" evidence="1">
    <location>
        <begin position="251"/>
        <end position="331"/>
    </location>
</feature>
<feature type="zinc finger region" description="CHC2-type" evidence="1">
    <location>
        <begin position="38"/>
        <end position="62"/>
    </location>
</feature>
<feature type="region of interest" description="Disordered" evidence="2">
    <location>
        <begin position="430"/>
        <end position="451"/>
    </location>
</feature>
<feature type="compositionally biased region" description="Basic and acidic residues" evidence="2">
    <location>
        <begin position="430"/>
        <end position="441"/>
    </location>
</feature>
<feature type="binding site" evidence="1">
    <location>
        <position position="257"/>
    </location>
    <ligand>
        <name>Mg(2+)</name>
        <dbReference type="ChEBI" id="CHEBI:18420"/>
        <label>1</label>
        <note>catalytic</note>
    </ligand>
</feature>
<feature type="binding site" evidence="1">
    <location>
        <position position="302"/>
    </location>
    <ligand>
        <name>Mg(2+)</name>
        <dbReference type="ChEBI" id="CHEBI:18420"/>
        <label>1</label>
        <note>catalytic</note>
    </ligand>
</feature>
<feature type="binding site" evidence="1">
    <location>
        <position position="302"/>
    </location>
    <ligand>
        <name>Mg(2+)</name>
        <dbReference type="ChEBI" id="CHEBI:18420"/>
        <label>2</label>
    </ligand>
</feature>
<feature type="binding site" evidence="1">
    <location>
        <position position="304"/>
    </location>
    <ligand>
        <name>Mg(2+)</name>
        <dbReference type="ChEBI" id="CHEBI:18420"/>
        <label>2</label>
    </ligand>
</feature>
<reference key="1">
    <citation type="journal article" date="1998" name="Science">
        <title>Genome sequence of an obligate intracellular pathogen of humans: Chlamydia trachomatis.</title>
        <authorList>
            <person name="Stephens R.S."/>
            <person name="Kalman S."/>
            <person name="Lammel C.J."/>
            <person name="Fan J."/>
            <person name="Marathe R."/>
            <person name="Aravind L."/>
            <person name="Mitchell W.P."/>
            <person name="Olinger L."/>
            <person name="Tatusov R.L."/>
            <person name="Zhao Q."/>
            <person name="Koonin E.V."/>
            <person name="Davis R.W."/>
        </authorList>
    </citation>
    <scope>NUCLEOTIDE SEQUENCE [LARGE SCALE GENOMIC DNA]</scope>
    <source>
        <strain>ATCC VR-885 / DSM 19411 / UW-3/Cx</strain>
    </source>
</reference>
<accession>O84799</accession>
<organism>
    <name type="scientific">Chlamydia trachomatis serovar D (strain ATCC VR-885 / DSM 19411 / UW-3/Cx)</name>
    <dbReference type="NCBI Taxonomy" id="272561"/>
    <lineage>
        <taxon>Bacteria</taxon>
        <taxon>Pseudomonadati</taxon>
        <taxon>Chlamydiota</taxon>
        <taxon>Chlamydiia</taxon>
        <taxon>Chlamydiales</taxon>
        <taxon>Chlamydiaceae</taxon>
        <taxon>Chlamydia/Chlamydophila group</taxon>
        <taxon>Chlamydia</taxon>
    </lineage>
</organism>
<dbReference type="EC" id="2.7.7.101" evidence="1"/>
<dbReference type="EMBL" id="AE001273">
    <property type="protein sequence ID" value="AAC68389.1"/>
    <property type="molecule type" value="Genomic_DNA"/>
</dbReference>
<dbReference type="PIR" id="F71471">
    <property type="entry name" value="F71471"/>
</dbReference>
<dbReference type="RefSeq" id="NP_220313.1">
    <property type="nucleotide sequence ID" value="NC_000117.1"/>
</dbReference>
<dbReference type="RefSeq" id="WP_009872175.1">
    <property type="nucleotide sequence ID" value="NC_000117.1"/>
</dbReference>
<dbReference type="SMR" id="O84799"/>
<dbReference type="FunCoup" id="O84799">
    <property type="interactions" value="180"/>
</dbReference>
<dbReference type="STRING" id="272561.CT_794"/>
<dbReference type="EnsemblBacteria" id="AAC68389">
    <property type="protein sequence ID" value="AAC68389"/>
    <property type="gene ID" value="CT_794"/>
</dbReference>
<dbReference type="GeneID" id="884592"/>
<dbReference type="KEGG" id="ctr:CT_794"/>
<dbReference type="PATRIC" id="fig|272561.5.peg.872"/>
<dbReference type="HOGENOM" id="CLU_013501_3_3_0"/>
<dbReference type="InParanoid" id="O84799"/>
<dbReference type="OrthoDB" id="9803773at2"/>
<dbReference type="Proteomes" id="UP000000431">
    <property type="component" value="Chromosome"/>
</dbReference>
<dbReference type="GO" id="GO:0005737">
    <property type="term" value="C:cytoplasm"/>
    <property type="evidence" value="ECO:0000318"/>
    <property type="project" value="GO_Central"/>
</dbReference>
<dbReference type="GO" id="GO:0000428">
    <property type="term" value="C:DNA-directed RNA polymerase complex"/>
    <property type="evidence" value="ECO:0007669"/>
    <property type="project" value="UniProtKB-KW"/>
</dbReference>
<dbReference type="GO" id="GO:1990077">
    <property type="term" value="C:primosome complex"/>
    <property type="evidence" value="ECO:0007669"/>
    <property type="project" value="UniProtKB-KW"/>
</dbReference>
<dbReference type="GO" id="GO:0003677">
    <property type="term" value="F:DNA binding"/>
    <property type="evidence" value="ECO:0007669"/>
    <property type="project" value="UniProtKB-KW"/>
</dbReference>
<dbReference type="GO" id="GO:0003899">
    <property type="term" value="F:DNA-directed RNA polymerase activity"/>
    <property type="evidence" value="ECO:0007669"/>
    <property type="project" value="InterPro"/>
</dbReference>
<dbReference type="GO" id="GO:0008270">
    <property type="term" value="F:zinc ion binding"/>
    <property type="evidence" value="ECO:0007669"/>
    <property type="project" value="UniProtKB-UniRule"/>
</dbReference>
<dbReference type="GO" id="GO:0006269">
    <property type="term" value="P:DNA replication, synthesis of primer"/>
    <property type="evidence" value="ECO:0000318"/>
    <property type="project" value="GO_Central"/>
</dbReference>
<dbReference type="CDD" id="cd03364">
    <property type="entry name" value="TOPRIM_DnaG_primases"/>
    <property type="match status" value="1"/>
</dbReference>
<dbReference type="FunFam" id="3.90.580.10:FF:000001">
    <property type="entry name" value="DNA primase"/>
    <property type="match status" value="1"/>
</dbReference>
<dbReference type="Gene3D" id="3.40.1360.10">
    <property type="match status" value="1"/>
</dbReference>
<dbReference type="Gene3D" id="3.90.980.10">
    <property type="entry name" value="DNA primase, catalytic core, N-terminal domain"/>
    <property type="match status" value="1"/>
</dbReference>
<dbReference type="Gene3D" id="3.90.580.10">
    <property type="entry name" value="Zinc finger, CHC2-type domain"/>
    <property type="match status" value="1"/>
</dbReference>
<dbReference type="HAMAP" id="MF_00974">
    <property type="entry name" value="DNA_primase_DnaG"/>
    <property type="match status" value="1"/>
</dbReference>
<dbReference type="InterPro" id="IPR037068">
    <property type="entry name" value="DNA_primase_core_N_sf"/>
</dbReference>
<dbReference type="InterPro" id="IPR006295">
    <property type="entry name" value="DNA_primase_DnaG"/>
</dbReference>
<dbReference type="InterPro" id="IPR036977">
    <property type="entry name" value="DNA_primase_Znf_CHC2"/>
</dbReference>
<dbReference type="InterPro" id="IPR030846">
    <property type="entry name" value="DnaG_bac"/>
</dbReference>
<dbReference type="InterPro" id="IPR013264">
    <property type="entry name" value="DNAG_N"/>
</dbReference>
<dbReference type="InterPro" id="IPR050219">
    <property type="entry name" value="DnaG_primase"/>
</dbReference>
<dbReference type="InterPro" id="IPR034151">
    <property type="entry name" value="TOPRIM_DnaG_bac"/>
</dbReference>
<dbReference type="InterPro" id="IPR006171">
    <property type="entry name" value="TOPRIM_dom"/>
</dbReference>
<dbReference type="InterPro" id="IPR002694">
    <property type="entry name" value="Znf_CHC2"/>
</dbReference>
<dbReference type="NCBIfam" id="TIGR01391">
    <property type="entry name" value="dnaG"/>
    <property type="match status" value="1"/>
</dbReference>
<dbReference type="PANTHER" id="PTHR30313">
    <property type="entry name" value="DNA PRIMASE"/>
    <property type="match status" value="1"/>
</dbReference>
<dbReference type="PANTHER" id="PTHR30313:SF2">
    <property type="entry name" value="DNA PRIMASE"/>
    <property type="match status" value="1"/>
</dbReference>
<dbReference type="Pfam" id="PF08275">
    <property type="entry name" value="DNAG_N"/>
    <property type="match status" value="1"/>
</dbReference>
<dbReference type="Pfam" id="PF13155">
    <property type="entry name" value="Toprim_2"/>
    <property type="match status" value="1"/>
</dbReference>
<dbReference type="Pfam" id="PF01807">
    <property type="entry name" value="Zn_ribbon_DnaG"/>
    <property type="match status" value="1"/>
</dbReference>
<dbReference type="PIRSF" id="PIRSF002811">
    <property type="entry name" value="DnaG"/>
    <property type="match status" value="1"/>
</dbReference>
<dbReference type="SMART" id="SM00493">
    <property type="entry name" value="TOPRIM"/>
    <property type="match status" value="1"/>
</dbReference>
<dbReference type="SMART" id="SM00400">
    <property type="entry name" value="ZnF_CHCC"/>
    <property type="match status" value="1"/>
</dbReference>
<dbReference type="SUPFAM" id="SSF56731">
    <property type="entry name" value="DNA primase core"/>
    <property type="match status" value="1"/>
</dbReference>
<dbReference type="SUPFAM" id="SSF57783">
    <property type="entry name" value="Zinc beta-ribbon"/>
    <property type="match status" value="1"/>
</dbReference>
<dbReference type="PROSITE" id="PS50880">
    <property type="entry name" value="TOPRIM"/>
    <property type="match status" value="1"/>
</dbReference>
<gene>
    <name evidence="1" type="primary">dnaG</name>
    <name type="ordered locus">CT_794</name>
</gene>
<evidence type="ECO:0000255" key="1">
    <source>
        <dbReference type="HAMAP-Rule" id="MF_00974"/>
    </source>
</evidence>
<evidence type="ECO:0000256" key="2">
    <source>
        <dbReference type="SAM" id="MobiDB-lite"/>
    </source>
</evidence>
<name>DNAG_CHLTR</name>
<keyword id="KW-0235">DNA replication</keyword>
<keyword id="KW-0238">DNA-binding</keyword>
<keyword id="KW-0240">DNA-directed RNA polymerase</keyword>
<keyword id="KW-0460">Magnesium</keyword>
<keyword id="KW-0479">Metal-binding</keyword>
<keyword id="KW-0548">Nucleotidyltransferase</keyword>
<keyword id="KW-0639">Primosome</keyword>
<keyword id="KW-1185">Reference proteome</keyword>
<keyword id="KW-0804">Transcription</keyword>
<keyword id="KW-0808">Transferase</keyword>
<keyword id="KW-0862">Zinc</keyword>
<keyword id="KW-0863">Zinc-finger</keyword>
<sequence length="595" mass="68037">MYYTEESLETLKHSIDIVSVLGEYVHLKRSGADYKACCPFHDEKTPSFIVYPTRGHYHCYGCGEHGDAINFLMKQQGYSFSEAVLFLAKKFHVDLVVRTKETSGQDSKDSLRRINREAERFFQYCLLHLPEGEEALAYLYKRGFSPDTIDRFQIGYAPEQRLFIQAMEERNISVKQLEWAGYLAKDWFLFAQRIMFPIQDALGYTIGFSSRRFKEGGRGGKYINSPETILFKKSRVLYGLQFSRKRIAKERRVILVEGQADCLQMIDFGFNCTLAAQGTSFTETHVHELVKLGVSKAYLLFDGDAAGEKASLRVGDLCQAAGITAIVCRLPSGQDPDSFLMQRGPEELRELLDRGEDYLSFLVWHKIHSYEQFTPREKARVIEEVIQQVRCWGSPITIHEYLRQLASLVKVPEPAVLSYLSSITSAAEDKGKKVSAKEPSSESKQTSTEGKISKKISPRMILEADVIRCLLFAKPEDEFVPATVKQYLSPEEFHCAEYRAIFVMAMNHYNDRQTLPSMDEMMSLVVGTEAMTLLVARRMNTELMRDIVVQSIQKLLDKHWRDKKRKLCHQTGKGLDSLQEYVRLSGERVKVSLVS</sequence>